<comment type="function">
    <text>Tubulin is the major constituent of microtubules, a cylinder consisting of laterally associated linear protofilaments composed of alpha- and beta-tubulin heterodimers. Microtubules grow by the addition of GTP-tubulin dimers to the microtubule end, where a stabilizing cap forms. Below the cap, tubulin dimers are in GDP-bound state, owing to GTPase activity of alpha-tubulin.</text>
</comment>
<comment type="cofactor">
    <cofactor evidence="1">
        <name>Mg(2+)</name>
        <dbReference type="ChEBI" id="CHEBI:18420"/>
    </cofactor>
</comment>
<comment type="subunit">
    <text>Dimer of alpha and beta chains. A typical microtubule is a hollow water-filled tube with an outer diameter of 25 nm and an inner diameter of 15 nM. Alpha-beta heterodimers associate head-to-tail to form protofilaments running lengthwise along the microtubule wall with the beta-tubulin subunit facing the microtubule plus end conferring a structural polarity. Microtubules usually have 13 protofilaments but different protofilament numbers can be found in some organisms and specialized cells.</text>
</comment>
<comment type="subcellular location">
    <subcellularLocation>
        <location>Cytoplasm</location>
        <location>Cytoskeleton</location>
    </subcellularLocation>
</comment>
<comment type="similarity">
    <text evidence="4">Belongs to the tubulin family.</text>
</comment>
<dbReference type="EMBL" id="M20025">
    <property type="protein sequence ID" value="AAA30146.1"/>
    <property type="molecule type" value="Genomic_DNA"/>
</dbReference>
<dbReference type="PIR" id="S16340">
    <property type="entry name" value="S16340"/>
</dbReference>
<dbReference type="SMR" id="P10878"/>
<dbReference type="VEuPathDB" id="ToxoDB:TGARI_266960"/>
<dbReference type="VEuPathDB" id="ToxoDB:TGCAST_266960"/>
<dbReference type="VEuPathDB" id="ToxoDB:TGCOUG_266960"/>
<dbReference type="VEuPathDB" id="ToxoDB:TGDOM2_266960"/>
<dbReference type="VEuPathDB" id="ToxoDB:TGFOU_266960"/>
<dbReference type="VEuPathDB" id="ToxoDB:TGGT1_266960"/>
<dbReference type="VEuPathDB" id="ToxoDB:TGMAS_266960"/>
<dbReference type="VEuPathDB" id="ToxoDB:TGME49_266960"/>
<dbReference type="VEuPathDB" id="ToxoDB:TGP89_266960"/>
<dbReference type="VEuPathDB" id="ToxoDB:TGPRC2_266960"/>
<dbReference type="VEuPathDB" id="ToxoDB:TGRH88_011050"/>
<dbReference type="VEuPathDB" id="ToxoDB:TGRUB_266960"/>
<dbReference type="VEuPathDB" id="ToxoDB:TGVAND_266960"/>
<dbReference type="VEuPathDB" id="ToxoDB:TGVEG_266960"/>
<dbReference type="GO" id="GO:0005737">
    <property type="term" value="C:cytoplasm"/>
    <property type="evidence" value="ECO:0007669"/>
    <property type="project" value="UniProtKB-KW"/>
</dbReference>
<dbReference type="GO" id="GO:0005874">
    <property type="term" value="C:microtubule"/>
    <property type="evidence" value="ECO:0007669"/>
    <property type="project" value="UniProtKB-KW"/>
</dbReference>
<dbReference type="GO" id="GO:0005525">
    <property type="term" value="F:GTP binding"/>
    <property type="evidence" value="ECO:0007669"/>
    <property type="project" value="UniProtKB-KW"/>
</dbReference>
<dbReference type="GO" id="GO:0003924">
    <property type="term" value="F:GTPase activity"/>
    <property type="evidence" value="ECO:0007669"/>
    <property type="project" value="InterPro"/>
</dbReference>
<dbReference type="GO" id="GO:0046872">
    <property type="term" value="F:metal ion binding"/>
    <property type="evidence" value="ECO:0007669"/>
    <property type="project" value="UniProtKB-KW"/>
</dbReference>
<dbReference type="GO" id="GO:0005200">
    <property type="term" value="F:structural constituent of cytoskeleton"/>
    <property type="evidence" value="ECO:0007669"/>
    <property type="project" value="InterPro"/>
</dbReference>
<dbReference type="GO" id="GO:0007017">
    <property type="term" value="P:microtubule-based process"/>
    <property type="evidence" value="ECO:0007669"/>
    <property type="project" value="InterPro"/>
</dbReference>
<dbReference type="CDD" id="cd02187">
    <property type="entry name" value="beta_tubulin"/>
    <property type="match status" value="1"/>
</dbReference>
<dbReference type="FunFam" id="1.10.287.600:FF:000006">
    <property type="entry name" value="Tubulin beta chain"/>
    <property type="match status" value="1"/>
</dbReference>
<dbReference type="FunFam" id="3.30.1330.20:FF:000002">
    <property type="entry name" value="Tubulin beta chain"/>
    <property type="match status" value="1"/>
</dbReference>
<dbReference type="FunFam" id="3.40.50.1440:FF:000005">
    <property type="entry name" value="Tubulin beta chain"/>
    <property type="match status" value="1"/>
</dbReference>
<dbReference type="Gene3D" id="1.10.287.600">
    <property type="entry name" value="Helix hairpin bin"/>
    <property type="match status" value="1"/>
</dbReference>
<dbReference type="Gene3D" id="3.30.1330.20">
    <property type="entry name" value="Tubulin/FtsZ, C-terminal domain"/>
    <property type="match status" value="1"/>
</dbReference>
<dbReference type="Gene3D" id="3.40.50.1440">
    <property type="entry name" value="Tubulin/FtsZ, GTPase domain"/>
    <property type="match status" value="1"/>
</dbReference>
<dbReference type="InterPro" id="IPR013838">
    <property type="entry name" value="Beta-tubulin_BS"/>
</dbReference>
<dbReference type="InterPro" id="IPR002453">
    <property type="entry name" value="Beta_tubulin"/>
</dbReference>
<dbReference type="InterPro" id="IPR008280">
    <property type="entry name" value="Tub_FtsZ_C"/>
</dbReference>
<dbReference type="InterPro" id="IPR000217">
    <property type="entry name" value="Tubulin"/>
</dbReference>
<dbReference type="InterPro" id="IPR037103">
    <property type="entry name" value="Tubulin/FtsZ-like_C"/>
</dbReference>
<dbReference type="InterPro" id="IPR018316">
    <property type="entry name" value="Tubulin/FtsZ_2-layer-sand-dom"/>
</dbReference>
<dbReference type="InterPro" id="IPR036525">
    <property type="entry name" value="Tubulin/FtsZ_GTPase_sf"/>
</dbReference>
<dbReference type="InterPro" id="IPR023123">
    <property type="entry name" value="Tubulin_C"/>
</dbReference>
<dbReference type="InterPro" id="IPR017975">
    <property type="entry name" value="Tubulin_CS"/>
</dbReference>
<dbReference type="InterPro" id="IPR003008">
    <property type="entry name" value="Tubulin_FtsZ_GTPase"/>
</dbReference>
<dbReference type="PANTHER" id="PTHR11588">
    <property type="entry name" value="TUBULIN"/>
    <property type="match status" value="1"/>
</dbReference>
<dbReference type="Pfam" id="PF00091">
    <property type="entry name" value="Tubulin"/>
    <property type="match status" value="1"/>
</dbReference>
<dbReference type="Pfam" id="PF03953">
    <property type="entry name" value="Tubulin_C"/>
    <property type="match status" value="1"/>
</dbReference>
<dbReference type="PRINTS" id="PR01163">
    <property type="entry name" value="BETATUBULIN"/>
</dbReference>
<dbReference type="PRINTS" id="PR01161">
    <property type="entry name" value="TUBULIN"/>
</dbReference>
<dbReference type="SMART" id="SM00864">
    <property type="entry name" value="Tubulin"/>
    <property type="match status" value="1"/>
</dbReference>
<dbReference type="SMART" id="SM00865">
    <property type="entry name" value="Tubulin_C"/>
    <property type="match status" value="1"/>
</dbReference>
<dbReference type="SUPFAM" id="SSF55307">
    <property type="entry name" value="Tubulin C-terminal domain-like"/>
    <property type="match status" value="1"/>
</dbReference>
<dbReference type="SUPFAM" id="SSF52490">
    <property type="entry name" value="Tubulin nucleotide-binding domain-like"/>
    <property type="match status" value="1"/>
</dbReference>
<dbReference type="PROSITE" id="PS00227">
    <property type="entry name" value="TUBULIN"/>
    <property type="match status" value="1"/>
</dbReference>
<dbReference type="PROSITE" id="PS00228">
    <property type="entry name" value="TUBULIN_B_AUTOREG"/>
    <property type="match status" value="1"/>
</dbReference>
<proteinExistence type="inferred from homology"/>
<evidence type="ECO:0000250" key="1">
    <source>
        <dbReference type="UniProtKB" id="P68363"/>
    </source>
</evidence>
<evidence type="ECO:0000250" key="2">
    <source>
        <dbReference type="UniProtKB" id="Q13509"/>
    </source>
</evidence>
<evidence type="ECO:0000256" key="3">
    <source>
        <dbReference type="SAM" id="MobiDB-lite"/>
    </source>
</evidence>
<evidence type="ECO:0000305" key="4"/>
<name>TBB_TOXGO</name>
<reference key="1">
    <citation type="journal article" date="1988" name="Mol. Biochem. Parasitol.">
        <title>The alpha- and beta-tubulins of Toxoplasma gondii are encoded by single copy genes containing multiple introns.</title>
        <authorList>
            <person name="Nagel S.D."/>
            <person name="Boothroyd J.C."/>
        </authorList>
    </citation>
    <scope>NUCLEOTIDE SEQUENCE [GENOMIC DNA]</scope>
</reference>
<feature type="chain" id="PRO_0000048318" description="Tubulin beta chain">
    <location>
        <begin position="1"/>
        <end position="449"/>
    </location>
</feature>
<feature type="region of interest" description="Disordered" evidence="3">
    <location>
        <begin position="426"/>
        <end position="449"/>
    </location>
</feature>
<feature type="compositionally biased region" description="Acidic residues" evidence="3">
    <location>
        <begin position="429"/>
        <end position="449"/>
    </location>
</feature>
<feature type="binding site" evidence="2">
    <location>
        <position position="11"/>
    </location>
    <ligand>
        <name>GTP</name>
        <dbReference type="ChEBI" id="CHEBI:37565"/>
    </ligand>
</feature>
<feature type="binding site" evidence="1">
    <location>
        <position position="69"/>
    </location>
    <ligand>
        <name>GTP</name>
        <dbReference type="ChEBI" id="CHEBI:37565"/>
    </ligand>
</feature>
<feature type="binding site" evidence="1">
    <location>
        <position position="69"/>
    </location>
    <ligand>
        <name>Mg(2+)</name>
        <dbReference type="ChEBI" id="CHEBI:18420"/>
    </ligand>
</feature>
<feature type="binding site" evidence="2">
    <location>
        <position position="138"/>
    </location>
    <ligand>
        <name>GTP</name>
        <dbReference type="ChEBI" id="CHEBI:37565"/>
    </ligand>
</feature>
<feature type="binding site" evidence="2">
    <location>
        <position position="142"/>
    </location>
    <ligand>
        <name>GTP</name>
        <dbReference type="ChEBI" id="CHEBI:37565"/>
    </ligand>
</feature>
<feature type="binding site" evidence="2">
    <location>
        <position position="143"/>
    </location>
    <ligand>
        <name>GTP</name>
        <dbReference type="ChEBI" id="CHEBI:37565"/>
    </ligand>
</feature>
<feature type="binding site" evidence="2">
    <location>
        <position position="144"/>
    </location>
    <ligand>
        <name>GTP</name>
        <dbReference type="ChEBI" id="CHEBI:37565"/>
    </ligand>
</feature>
<feature type="binding site" evidence="2">
    <location>
        <position position="204"/>
    </location>
    <ligand>
        <name>GTP</name>
        <dbReference type="ChEBI" id="CHEBI:37565"/>
    </ligand>
</feature>
<feature type="binding site" evidence="2">
    <location>
        <position position="226"/>
    </location>
    <ligand>
        <name>GTP</name>
        <dbReference type="ChEBI" id="CHEBI:37565"/>
    </ligand>
</feature>
<sequence length="449" mass="50059">MREIVHVQGGQCGNQIGAKFWEVISDEHGIDPTGTYCGDSDLQLERINVFYNEATGGRFVPRAILMDLEPGTMDSVRAGPFGQLFRPDNFVFGQTGAGNNWAKGHYTEGAELIDSVLDVVRKEAEGCDCLQGFQITHSLGGGTGSGMGTLLISKVREEYPDRIMETFSVFPSPKVSDTVVEPYNATLSVHQLVENADEVQVIDNEALYDICFRTLKLTTPTYGDLNHLVSAAMSGVTCCLRFPGQLNSDLRKLAVNLVPFPRLHFFLIGFAPLTSRGSQQYRALSVPELTQQMFDAKNMMCASDPRHGRYLTASAMFRGRMSTKEVDEQMLNVQNKNSSYFVEWIPNNMKSSVCDIPPKGLKMSVTFVGNSTAIQEMFKRVSDQFTAMFRRKAFLHWYTGEGMDEMEFTEAESNMNDLVSEYQQYQDATAEEEGEFDEEEGEMGAEEGA</sequence>
<accession>P10878</accession>
<organism>
    <name type="scientific">Toxoplasma gondii</name>
    <dbReference type="NCBI Taxonomy" id="5811"/>
    <lineage>
        <taxon>Eukaryota</taxon>
        <taxon>Sar</taxon>
        <taxon>Alveolata</taxon>
        <taxon>Apicomplexa</taxon>
        <taxon>Conoidasida</taxon>
        <taxon>Coccidia</taxon>
        <taxon>Eucoccidiorida</taxon>
        <taxon>Eimeriorina</taxon>
        <taxon>Sarcocystidae</taxon>
        <taxon>Toxoplasma</taxon>
    </lineage>
</organism>
<keyword id="KW-0963">Cytoplasm</keyword>
<keyword id="KW-0206">Cytoskeleton</keyword>
<keyword id="KW-0342">GTP-binding</keyword>
<keyword id="KW-0460">Magnesium</keyword>
<keyword id="KW-0479">Metal-binding</keyword>
<keyword id="KW-0493">Microtubule</keyword>
<keyword id="KW-0547">Nucleotide-binding</keyword>
<protein>
    <recommendedName>
        <fullName>Tubulin beta chain</fullName>
    </recommendedName>
    <alternativeName>
        <fullName>Beta-tubulin</fullName>
    </alternativeName>
</protein>